<keyword id="KW-0028">Amino-acid biosynthesis</keyword>
<keyword id="KW-0067">ATP-binding</keyword>
<keyword id="KW-0963">Cytoplasm</keyword>
<keyword id="KW-0328">Glycosyltransferase</keyword>
<keyword id="KW-0368">Histidine biosynthesis</keyword>
<keyword id="KW-0547">Nucleotide-binding</keyword>
<keyword id="KW-0808">Transferase</keyword>
<comment type="function">
    <text evidence="1">Catalyzes the condensation of ATP and 5-phosphoribose 1-diphosphate to form N'-(5'-phosphoribosyl)-ATP (PR-ATP). Has a crucial role in the pathway because the rate of histidine biosynthesis seems to be controlled primarily by regulation of HisG enzymatic activity.</text>
</comment>
<comment type="catalytic activity">
    <reaction evidence="1">
        <text>1-(5-phospho-beta-D-ribosyl)-ATP + diphosphate = 5-phospho-alpha-D-ribose 1-diphosphate + ATP</text>
        <dbReference type="Rhea" id="RHEA:18473"/>
        <dbReference type="ChEBI" id="CHEBI:30616"/>
        <dbReference type="ChEBI" id="CHEBI:33019"/>
        <dbReference type="ChEBI" id="CHEBI:58017"/>
        <dbReference type="ChEBI" id="CHEBI:73183"/>
        <dbReference type="EC" id="2.4.2.17"/>
    </reaction>
</comment>
<comment type="pathway">
    <text evidence="1">Amino-acid biosynthesis; L-histidine biosynthesis; L-histidine from 5-phospho-alpha-D-ribose 1-diphosphate: step 1/9.</text>
</comment>
<comment type="subunit">
    <text evidence="1">Heteromultimer composed of HisG and HisZ subunits.</text>
</comment>
<comment type="subcellular location">
    <subcellularLocation>
        <location evidence="1">Cytoplasm</location>
    </subcellularLocation>
</comment>
<comment type="domain">
    <text>Lacks the C-terminal regulatory region which is replaced by HisZ.</text>
</comment>
<comment type="similarity">
    <text evidence="1">Belongs to the ATP phosphoribosyltransferase family. Short subfamily.</text>
</comment>
<accession>Q04U38</accession>
<proteinExistence type="inferred from homology"/>
<dbReference type="EC" id="2.4.2.17" evidence="1"/>
<dbReference type="EMBL" id="CP000350">
    <property type="protein sequence ID" value="ABJ75582.1"/>
    <property type="molecule type" value="Genomic_DNA"/>
</dbReference>
<dbReference type="RefSeq" id="WP_002726231.1">
    <property type="nucleotide sequence ID" value="NC_008510.1"/>
</dbReference>
<dbReference type="SMR" id="Q04U38"/>
<dbReference type="GeneID" id="61174764"/>
<dbReference type="KEGG" id="lbj:LBJ_0938"/>
<dbReference type="HOGENOM" id="CLU_038115_2_0_12"/>
<dbReference type="UniPathway" id="UPA00031">
    <property type="reaction ID" value="UER00006"/>
</dbReference>
<dbReference type="Proteomes" id="UP000000656">
    <property type="component" value="Chromosome 1"/>
</dbReference>
<dbReference type="GO" id="GO:0005737">
    <property type="term" value="C:cytoplasm"/>
    <property type="evidence" value="ECO:0007669"/>
    <property type="project" value="UniProtKB-SubCell"/>
</dbReference>
<dbReference type="GO" id="GO:0005524">
    <property type="term" value="F:ATP binding"/>
    <property type="evidence" value="ECO:0007669"/>
    <property type="project" value="UniProtKB-KW"/>
</dbReference>
<dbReference type="GO" id="GO:0003879">
    <property type="term" value="F:ATP phosphoribosyltransferase activity"/>
    <property type="evidence" value="ECO:0007669"/>
    <property type="project" value="UniProtKB-UniRule"/>
</dbReference>
<dbReference type="GO" id="GO:0000105">
    <property type="term" value="P:L-histidine biosynthetic process"/>
    <property type="evidence" value="ECO:0007669"/>
    <property type="project" value="UniProtKB-UniRule"/>
</dbReference>
<dbReference type="CDD" id="cd13595">
    <property type="entry name" value="PBP2_HisGs"/>
    <property type="match status" value="1"/>
</dbReference>
<dbReference type="FunFam" id="3.40.190.10:FF:000008">
    <property type="entry name" value="ATP phosphoribosyltransferase"/>
    <property type="match status" value="1"/>
</dbReference>
<dbReference type="Gene3D" id="3.40.190.10">
    <property type="entry name" value="Periplasmic binding protein-like II"/>
    <property type="match status" value="2"/>
</dbReference>
<dbReference type="HAMAP" id="MF_01018">
    <property type="entry name" value="HisG_Short"/>
    <property type="match status" value="1"/>
</dbReference>
<dbReference type="InterPro" id="IPR013820">
    <property type="entry name" value="ATP_PRibTrfase_cat"/>
</dbReference>
<dbReference type="InterPro" id="IPR018198">
    <property type="entry name" value="ATP_PRibTrfase_CS"/>
</dbReference>
<dbReference type="InterPro" id="IPR001348">
    <property type="entry name" value="ATP_PRibTrfase_HisG"/>
</dbReference>
<dbReference type="InterPro" id="IPR024893">
    <property type="entry name" value="ATP_PRibTrfase_HisG_short"/>
</dbReference>
<dbReference type="NCBIfam" id="TIGR00070">
    <property type="entry name" value="hisG"/>
    <property type="match status" value="1"/>
</dbReference>
<dbReference type="PANTHER" id="PTHR21403:SF8">
    <property type="entry name" value="ATP PHOSPHORIBOSYLTRANSFERASE"/>
    <property type="match status" value="1"/>
</dbReference>
<dbReference type="PANTHER" id="PTHR21403">
    <property type="entry name" value="ATP PHOSPHORIBOSYLTRANSFERASE ATP-PRTASE"/>
    <property type="match status" value="1"/>
</dbReference>
<dbReference type="Pfam" id="PF01634">
    <property type="entry name" value="HisG"/>
    <property type="match status" value="1"/>
</dbReference>
<dbReference type="SUPFAM" id="SSF53850">
    <property type="entry name" value="Periplasmic binding protein-like II"/>
    <property type="match status" value="1"/>
</dbReference>
<dbReference type="PROSITE" id="PS01316">
    <property type="entry name" value="ATP_P_PHORIBOSYLTR"/>
    <property type="match status" value="1"/>
</dbReference>
<reference key="1">
    <citation type="journal article" date="2006" name="Proc. Natl. Acad. Sci. U.S.A.">
        <title>Genome reduction in Leptospira borgpetersenii reflects limited transmission potential.</title>
        <authorList>
            <person name="Bulach D.M."/>
            <person name="Zuerner R.L."/>
            <person name="Wilson P."/>
            <person name="Seemann T."/>
            <person name="McGrath A."/>
            <person name="Cullen P.A."/>
            <person name="Davis J."/>
            <person name="Johnson M."/>
            <person name="Kuczek E."/>
            <person name="Alt D.P."/>
            <person name="Peterson-Burch B."/>
            <person name="Coppel R.L."/>
            <person name="Rood J.I."/>
            <person name="Davies J.K."/>
            <person name="Adler B."/>
        </authorList>
    </citation>
    <scope>NUCLEOTIDE SEQUENCE [LARGE SCALE GENOMIC DNA]</scope>
    <source>
        <strain>JB197</strain>
    </source>
</reference>
<feature type="chain" id="PRO_1000063283" description="ATP phosphoribosyltransferase">
    <location>
        <begin position="1"/>
        <end position="205"/>
    </location>
</feature>
<sequence>MLTLALPKGRLAEESIDLMISKGWLSAKPDPDSKELIYNDPLGKIRILLVRSQDVATYVEQCAADAGISGWDVLKEGGYDLATPLDLGIGKCRLSLAAPEGYTLEARHRKIRVATKYPNLAREFFFHKGLSCEIFKLYGSIELAPLVGLSDCIVDLVSTGGTLKANGLKELNIILESSARLVFNRSSLYGKRKEAAEFMDSLSKI</sequence>
<gene>
    <name evidence="1" type="primary">hisG</name>
    <name type="ordered locus">LBJ_0938</name>
</gene>
<name>HIS1_LEPBJ</name>
<organism>
    <name type="scientific">Leptospira borgpetersenii serovar Hardjo-bovis (strain JB197)</name>
    <dbReference type="NCBI Taxonomy" id="355277"/>
    <lineage>
        <taxon>Bacteria</taxon>
        <taxon>Pseudomonadati</taxon>
        <taxon>Spirochaetota</taxon>
        <taxon>Spirochaetia</taxon>
        <taxon>Leptospirales</taxon>
        <taxon>Leptospiraceae</taxon>
        <taxon>Leptospira</taxon>
    </lineage>
</organism>
<evidence type="ECO:0000255" key="1">
    <source>
        <dbReference type="HAMAP-Rule" id="MF_01018"/>
    </source>
</evidence>
<protein>
    <recommendedName>
        <fullName evidence="1">ATP phosphoribosyltransferase</fullName>
        <shortName evidence="1">ATP-PRT</shortName>
        <shortName evidence="1">ATP-PRTase</shortName>
        <ecNumber evidence="1">2.4.2.17</ecNumber>
    </recommendedName>
</protein>